<gene>
    <name evidence="1" type="primary">rplD</name>
    <name type="ordered locus">BA_0111</name>
    <name type="ordered locus">GBAA_0111</name>
    <name type="ordered locus">BAS0111</name>
</gene>
<reference key="1">
    <citation type="journal article" date="2003" name="Nature">
        <title>The genome sequence of Bacillus anthracis Ames and comparison to closely related bacteria.</title>
        <authorList>
            <person name="Read T.D."/>
            <person name="Peterson S.N."/>
            <person name="Tourasse N.J."/>
            <person name="Baillie L.W."/>
            <person name="Paulsen I.T."/>
            <person name="Nelson K.E."/>
            <person name="Tettelin H."/>
            <person name="Fouts D.E."/>
            <person name="Eisen J.A."/>
            <person name="Gill S.R."/>
            <person name="Holtzapple E.K."/>
            <person name="Okstad O.A."/>
            <person name="Helgason E."/>
            <person name="Rilstone J."/>
            <person name="Wu M."/>
            <person name="Kolonay J.F."/>
            <person name="Beanan M.J."/>
            <person name="Dodson R.J."/>
            <person name="Brinkac L.M."/>
            <person name="Gwinn M.L."/>
            <person name="DeBoy R.T."/>
            <person name="Madpu R."/>
            <person name="Daugherty S.C."/>
            <person name="Durkin A.S."/>
            <person name="Haft D.H."/>
            <person name="Nelson W.C."/>
            <person name="Peterson J.D."/>
            <person name="Pop M."/>
            <person name="Khouri H.M."/>
            <person name="Radune D."/>
            <person name="Benton J.L."/>
            <person name="Mahamoud Y."/>
            <person name="Jiang L."/>
            <person name="Hance I.R."/>
            <person name="Weidman J.F."/>
            <person name="Berry K.J."/>
            <person name="Plaut R.D."/>
            <person name="Wolf A.M."/>
            <person name="Watkins K.L."/>
            <person name="Nierman W.C."/>
            <person name="Hazen A."/>
            <person name="Cline R.T."/>
            <person name="Redmond C."/>
            <person name="Thwaite J.E."/>
            <person name="White O."/>
            <person name="Salzberg S.L."/>
            <person name="Thomason B."/>
            <person name="Friedlander A.M."/>
            <person name="Koehler T.M."/>
            <person name="Hanna P.C."/>
            <person name="Kolstoe A.-B."/>
            <person name="Fraser C.M."/>
        </authorList>
    </citation>
    <scope>NUCLEOTIDE SEQUENCE [LARGE SCALE GENOMIC DNA]</scope>
    <source>
        <strain>Ames / isolate Porton</strain>
    </source>
</reference>
<reference key="2">
    <citation type="journal article" date="2009" name="J. Bacteriol.">
        <title>The complete genome sequence of Bacillus anthracis Ames 'Ancestor'.</title>
        <authorList>
            <person name="Ravel J."/>
            <person name="Jiang L."/>
            <person name="Stanley S.T."/>
            <person name="Wilson M.R."/>
            <person name="Decker R.S."/>
            <person name="Read T.D."/>
            <person name="Worsham P."/>
            <person name="Keim P.S."/>
            <person name="Salzberg S.L."/>
            <person name="Fraser-Liggett C.M."/>
            <person name="Rasko D.A."/>
        </authorList>
    </citation>
    <scope>NUCLEOTIDE SEQUENCE [LARGE SCALE GENOMIC DNA]</scope>
    <source>
        <strain>Ames ancestor</strain>
    </source>
</reference>
<reference key="3">
    <citation type="submission" date="2004-01" db="EMBL/GenBank/DDBJ databases">
        <title>Complete genome sequence of Bacillus anthracis Sterne.</title>
        <authorList>
            <person name="Brettin T.S."/>
            <person name="Bruce D."/>
            <person name="Challacombe J.F."/>
            <person name="Gilna P."/>
            <person name="Han C."/>
            <person name="Hill K."/>
            <person name="Hitchcock P."/>
            <person name="Jackson P."/>
            <person name="Keim P."/>
            <person name="Longmire J."/>
            <person name="Lucas S."/>
            <person name="Okinaka R."/>
            <person name="Richardson P."/>
            <person name="Rubin E."/>
            <person name="Tice H."/>
        </authorList>
    </citation>
    <scope>NUCLEOTIDE SEQUENCE [LARGE SCALE GENOMIC DNA]</scope>
    <source>
        <strain>Sterne</strain>
    </source>
</reference>
<comment type="function">
    <text evidence="1">One of the primary rRNA binding proteins, this protein initially binds near the 5'-end of the 23S rRNA. It is important during the early stages of 50S assembly. It makes multiple contacts with different domains of the 23S rRNA in the assembled 50S subunit and ribosome.</text>
</comment>
<comment type="function">
    <text evidence="1">Forms part of the polypeptide exit tunnel.</text>
</comment>
<comment type="subunit">
    <text evidence="1">Part of the 50S ribosomal subunit.</text>
</comment>
<comment type="similarity">
    <text evidence="1">Belongs to the universal ribosomal protein uL4 family.</text>
</comment>
<proteinExistence type="inferred from homology"/>
<evidence type="ECO:0000255" key="1">
    <source>
        <dbReference type="HAMAP-Rule" id="MF_01328"/>
    </source>
</evidence>
<evidence type="ECO:0000256" key="2">
    <source>
        <dbReference type="SAM" id="MobiDB-lite"/>
    </source>
</evidence>
<evidence type="ECO:0000305" key="3"/>
<sequence>MPKVTVYNQTGSQVGEIELAEAIFGIEPNEAVLFEAVMMQRASLRQGTHKVKTRSEVRGGGRKPWRQKGTGRARQGSIRSPQWRGGGTVFGPTPRSYAYKLPKKVRRLAIKSALATKVVENNIVVLEDLVLNAPKTKDMLAVLKGLTVEKKALIVTADANESVELSARNIPGVTVITADGVNVLDVLHHDKLIMTKAAVEKVEEVLA</sequence>
<name>RL4_BACAN</name>
<dbReference type="EMBL" id="AE016879">
    <property type="protein sequence ID" value="AAP24165.1"/>
    <property type="molecule type" value="Genomic_DNA"/>
</dbReference>
<dbReference type="EMBL" id="AE017334">
    <property type="protein sequence ID" value="AAT29191.1"/>
    <property type="molecule type" value="Genomic_DNA"/>
</dbReference>
<dbReference type="EMBL" id="AE017225">
    <property type="protein sequence ID" value="AAT52448.1"/>
    <property type="molecule type" value="Genomic_DNA"/>
</dbReference>
<dbReference type="RefSeq" id="NP_842679.1">
    <property type="nucleotide sequence ID" value="NC_003997.3"/>
</dbReference>
<dbReference type="RefSeq" id="WP_001127258.1">
    <property type="nucleotide sequence ID" value="NZ_WXXJ01000051.1"/>
</dbReference>
<dbReference type="RefSeq" id="YP_026397.1">
    <property type="nucleotide sequence ID" value="NC_005945.1"/>
</dbReference>
<dbReference type="SMR" id="Q81VS9"/>
<dbReference type="STRING" id="261594.GBAA_0111"/>
<dbReference type="DNASU" id="1086331"/>
<dbReference type="GeneID" id="93010942"/>
<dbReference type="KEGG" id="ban:BA_0111"/>
<dbReference type="KEGG" id="bar:GBAA_0111"/>
<dbReference type="KEGG" id="bat:BAS0111"/>
<dbReference type="PATRIC" id="fig|198094.11.peg.108"/>
<dbReference type="eggNOG" id="COG0088">
    <property type="taxonomic scope" value="Bacteria"/>
</dbReference>
<dbReference type="HOGENOM" id="CLU_041575_5_2_9"/>
<dbReference type="OMA" id="PQVHILE"/>
<dbReference type="OrthoDB" id="9803201at2"/>
<dbReference type="Proteomes" id="UP000000427">
    <property type="component" value="Chromosome"/>
</dbReference>
<dbReference type="Proteomes" id="UP000000594">
    <property type="component" value="Chromosome"/>
</dbReference>
<dbReference type="GO" id="GO:1990904">
    <property type="term" value="C:ribonucleoprotein complex"/>
    <property type="evidence" value="ECO:0007669"/>
    <property type="project" value="UniProtKB-KW"/>
</dbReference>
<dbReference type="GO" id="GO:0005840">
    <property type="term" value="C:ribosome"/>
    <property type="evidence" value="ECO:0007669"/>
    <property type="project" value="UniProtKB-KW"/>
</dbReference>
<dbReference type="GO" id="GO:0019843">
    <property type="term" value="F:rRNA binding"/>
    <property type="evidence" value="ECO:0007669"/>
    <property type="project" value="UniProtKB-UniRule"/>
</dbReference>
<dbReference type="GO" id="GO:0003735">
    <property type="term" value="F:structural constituent of ribosome"/>
    <property type="evidence" value="ECO:0007669"/>
    <property type="project" value="InterPro"/>
</dbReference>
<dbReference type="GO" id="GO:0006412">
    <property type="term" value="P:translation"/>
    <property type="evidence" value="ECO:0007669"/>
    <property type="project" value="UniProtKB-UniRule"/>
</dbReference>
<dbReference type="FunFam" id="3.40.1370.10:FF:000003">
    <property type="entry name" value="50S ribosomal protein L4"/>
    <property type="match status" value="1"/>
</dbReference>
<dbReference type="Gene3D" id="3.40.1370.10">
    <property type="match status" value="1"/>
</dbReference>
<dbReference type="HAMAP" id="MF_01328_B">
    <property type="entry name" value="Ribosomal_uL4_B"/>
    <property type="match status" value="1"/>
</dbReference>
<dbReference type="InterPro" id="IPR002136">
    <property type="entry name" value="Ribosomal_uL4"/>
</dbReference>
<dbReference type="InterPro" id="IPR013005">
    <property type="entry name" value="Ribosomal_uL4-like"/>
</dbReference>
<dbReference type="InterPro" id="IPR023574">
    <property type="entry name" value="Ribosomal_uL4_dom_sf"/>
</dbReference>
<dbReference type="NCBIfam" id="TIGR03953">
    <property type="entry name" value="rplD_bact"/>
    <property type="match status" value="1"/>
</dbReference>
<dbReference type="PANTHER" id="PTHR10746">
    <property type="entry name" value="50S RIBOSOMAL PROTEIN L4"/>
    <property type="match status" value="1"/>
</dbReference>
<dbReference type="PANTHER" id="PTHR10746:SF6">
    <property type="entry name" value="LARGE RIBOSOMAL SUBUNIT PROTEIN UL4M"/>
    <property type="match status" value="1"/>
</dbReference>
<dbReference type="Pfam" id="PF00573">
    <property type="entry name" value="Ribosomal_L4"/>
    <property type="match status" value="1"/>
</dbReference>
<dbReference type="SUPFAM" id="SSF52166">
    <property type="entry name" value="Ribosomal protein L4"/>
    <property type="match status" value="1"/>
</dbReference>
<feature type="chain" id="PRO_0000129179" description="Large ribosomal subunit protein uL4">
    <location>
        <begin position="1"/>
        <end position="207"/>
    </location>
</feature>
<feature type="region of interest" description="Disordered" evidence="2">
    <location>
        <begin position="45"/>
        <end position="89"/>
    </location>
</feature>
<feature type="compositionally biased region" description="Basic residues" evidence="2">
    <location>
        <begin position="60"/>
        <end position="71"/>
    </location>
</feature>
<accession>Q81VS9</accession>
<accession>Q6I4T3</accession>
<accession>Q6KYH9</accession>
<protein>
    <recommendedName>
        <fullName evidence="1">Large ribosomal subunit protein uL4</fullName>
    </recommendedName>
    <alternativeName>
        <fullName evidence="3">50S ribosomal protein L4</fullName>
    </alternativeName>
</protein>
<keyword id="KW-1185">Reference proteome</keyword>
<keyword id="KW-0687">Ribonucleoprotein</keyword>
<keyword id="KW-0689">Ribosomal protein</keyword>
<keyword id="KW-0694">RNA-binding</keyword>
<keyword id="KW-0699">rRNA-binding</keyword>
<organism>
    <name type="scientific">Bacillus anthracis</name>
    <dbReference type="NCBI Taxonomy" id="1392"/>
    <lineage>
        <taxon>Bacteria</taxon>
        <taxon>Bacillati</taxon>
        <taxon>Bacillota</taxon>
        <taxon>Bacilli</taxon>
        <taxon>Bacillales</taxon>
        <taxon>Bacillaceae</taxon>
        <taxon>Bacillus</taxon>
        <taxon>Bacillus cereus group</taxon>
    </lineage>
</organism>